<protein>
    <recommendedName>
        <fullName evidence="1">Glutamate 5-kinase</fullName>
        <ecNumber evidence="1">2.7.2.11</ecNumber>
    </recommendedName>
    <alternativeName>
        <fullName evidence="1">Gamma-glutamyl kinase</fullName>
        <shortName evidence="1">GK</shortName>
    </alternativeName>
</protein>
<evidence type="ECO:0000255" key="1">
    <source>
        <dbReference type="HAMAP-Rule" id="MF_00456"/>
    </source>
</evidence>
<keyword id="KW-0028">Amino-acid biosynthesis</keyword>
<keyword id="KW-0067">ATP-binding</keyword>
<keyword id="KW-0963">Cytoplasm</keyword>
<keyword id="KW-0418">Kinase</keyword>
<keyword id="KW-0547">Nucleotide-binding</keyword>
<keyword id="KW-0641">Proline biosynthesis</keyword>
<keyword id="KW-0808">Transferase</keyword>
<sequence>MNGNCYKRIVIKLGTSLLTGGTGKLDHERMADLCRQIADLTRLGTEVIIVSSGAIAAGRAKMGLRHIPKDVPFKQVLAAIGQSQLMNYYDQLFSPHGLTVAQGLLTKSDLSDRSGYLNARNTLLALMELGVITIVNENDVVAVDEIQQAKFGDNDNLSAMVANLIEADLLLILTNIRGLYTADPTLHPDARLITEVKEITEELEKLAAGSSNKLGTGGMVTKLEAARLATSSGVNVIIADGHIPDIILKLASGETEGTRFMPSLHKPDSRQRWMMSGLCTRGNICIDDGAVKAIRENQKSLLAAGVQQSEGKFGRGDIVKLSDSRGKRLGYGITNYSSDDVSKIKGLHTDEINTVLAGNQGPEIIHRNNLVVI</sequence>
<comment type="function">
    <text evidence="1">Catalyzes the transfer of a phosphate group to glutamate to form L-glutamate 5-phosphate.</text>
</comment>
<comment type="catalytic activity">
    <reaction evidence="1">
        <text>L-glutamate + ATP = L-glutamyl 5-phosphate + ADP</text>
        <dbReference type="Rhea" id="RHEA:14877"/>
        <dbReference type="ChEBI" id="CHEBI:29985"/>
        <dbReference type="ChEBI" id="CHEBI:30616"/>
        <dbReference type="ChEBI" id="CHEBI:58274"/>
        <dbReference type="ChEBI" id="CHEBI:456216"/>
        <dbReference type="EC" id="2.7.2.11"/>
    </reaction>
</comment>
<comment type="pathway">
    <text evidence="1">Amino-acid biosynthesis; L-proline biosynthesis; L-glutamate 5-semialdehyde from L-glutamate: step 1/2.</text>
</comment>
<comment type="subcellular location">
    <subcellularLocation>
        <location evidence="1">Cytoplasm</location>
    </subcellularLocation>
</comment>
<comment type="similarity">
    <text evidence="1">Belongs to the glutamate 5-kinase family.</text>
</comment>
<organism>
    <name type="scientific">Dehalococcoides mccartyi (strain ATCC BAA-2266 / KCTC 15142 / 195)</name>
    <name type="common">Dehalococcoides ethenogenes (strain 195)</name>
    <dbReference type="NCBI Taxonomy" id="243164"/>
    <lineage>
        <taxon>Bacteria</taxon>
        <taxon>Bacillati</taxon>
        <taxon>Chloroflexota</taxon>
        <taxon>Dehalococcoidia</taxon>
        <taxon>Dehalococcoidales</taxon>
        <taxon>Dehalococcoidaceae</taxon>
        <taxon>Dehalococcoides</taxon>
    </lineage>
</organism>
<accession>Q3Z705</accession>
<proteinExistence type="inferred from homology"/>
<reference key="1">
    <citation type="journal article" date="2005" name="Science">
        <title>Genome sequence of the PCE-dechlorinating bacterium Dehalococcoides ethenogenes.</title>
        <authorList>
            <person name="Seshadri R."/>
            <person name="Adrian L."/>
            <person name="Fouts D.E."/>
            <person name="Eisen J.A."/>
            <person name="Phillippy A.M."/>
            <person name="Methe B.A."/>
            <person name="Ward N.L."/>
            <person name="Nelson W.C."/>
            <person name="DeBoy R.T."/>
            <person name="Khouri H.M."/>
            <person name="Kolonay J.F."/>
            <person name="Dodson R.J."/>
            <person name="Daugherty S.C."/>
            <person name="Brinkac L.M."/>
            <person name="Sullivan S.A."/>
            <person name="Madupu R."/>
            <person name="Nelson K.E."/>
            <person name="Kang K.H."/>
            <person name="Impraim M."/>
            <person name="Tran K."/>
            <person name="Robinson J.M."/>
            <person name="Forberger H.A."/>
            <person name="Fraser C.M."/>
            <person name="Zinder S.H."/>
            <person name="Heidelberg J.F."/>
        </authorList>
    </citation>
    <scope>NUCLEOTIDE SEQUENCE [LARGE SCALE GENOMIC DNA]</scope>
    <source>
        <strain>ATCC BAA-2266 / KCTC 15142 / 195</strain>
    </source>
</reference>
<name>PROB_DEHM1</name>
<dbReference type="EC" id="2.7.2.11" evidence="1"/>
<dbReference type="EMBL" id="CP000027">
    <property type="protein sequence ID" value="AAW39433.1"/>
    <property type="molecule type" value="Genomic_DNA"/>
</dbReference>
<dbReference type="RefSeq" id="WP_010936971.1">
    <property type="nucleotide sequence ID" value="NC_002936.3"/>
</dbReference>
<dbReference type="SMR" id="Q3Z705"/>
<dbReference type="FunCoup" id="Q3Z705">
    <property type="interactions" value="249"/>
</dbReference>
<dbReference type="STRING" id="243164.DET1282"/>
<dbReference type="GeneID" id="3229393"/>
<dbReference type="KEGG" id="det:DET1282"/>
<dbReference type="PATRIC" id="fig|243164.10.peg.1212"/>
<dbReference type="eggNOG" id="COG0263">
    <property type="taxonomic scope" value="Bacteria"/>
</dbReference>
<dbReference type="HOGENOM" id="CLU_025400_2_0_0"/>
<dbReference type="InParanoid" id="Q3Z705"/>
<dbReference type="UniPathway" id="UPA00098">
    <property type="reaction ID" value="UER00359"/>
</dbReference>
<dbReference type="Proteomes" id="UP000008289">
    <property type="component" value="Chromosome"/>
</dbReference>
<dbReference type="GO" id="GO:0005829">
    <property type="term" value="C:cytosol"/>
    <property type="evidence" value="ECO:0007669"/>
    <property type="project" value="TreeGrafter"/>
</dbReference>
<dbReference type="GO" id="GO:0005524">
    <property type="term" value="F:ATP binding"/>
    <property type="evidence" value="ECO:0007669"/>
    <property type="project" value="UniProtKB-KW"/>
</dbReference>
<dbReference type="GO" id="GO:0004349">
    <property type="term" value="F:glutamate 5-kinase activity"/>
    <property type="evidence" value="ECO:0007669"/>
    <property type="project" value="UniProtKB-UniRule"/>
</dbReference>
<dbReference type="GO" id="GO:0003723">
    <property type="term" value="F:RNA binding"/>
    <property type="evidence" value="ECO:0007669"/>
    <property type="project" value="InterPro"/>
</dbReference>
<dbReference type="GO" id="GO:0055129">
    <property type="term" value="P:L-proline biosynthetic process"/>
    <property type="evidence" value="ECO:0007669"/>
    <property type="project" value="UniProtKB-UniRule"/>
</dbReference>
<dbReference type="CDD" id="cd04242">
    <property type="entry name" value="AAK_G5K_ProB"/>
    <property type="match status" value="1"/>
</dbReference>
<dbReference type="CDD" id="cd21157">
    <property type="entry name" value="PUA_G5K"/>
    <property type="match status" value="1"/>
</dbReference>
<dbReference type="FunFam" id="3.40.1160.10:FF:000018">
    <property type="entry name" value="Glutamate 5-kinase"/>
    <property type="match status" value="1"/>
</dbReference>
<dbReference type="Gene3D" id="3.40.1160.10">
    <property type="entry name" value="Acetylglutamate kinase-like"/>
    <property type="match status" value="1"/>
</dbReference>
<dbReference type="Gene3D" id="2.30.130.10">
    <property type="entry name" value="PUA domain"/>
    <property type="match status" value="1"/>
</dbReference>
<dbReference type="HAMAP" id="MF_00456">
    <property type="entry name" value="ProB"/>
    <property type="match status" value="1"/>
</dbReference>
<dbReference type="InterPro" id="IPR036393">
    <property type="entry name" value="AceGlu_kinase-like_sf"/>
</dbReference>
<dbReference type="InterPro" id="IPR001048">
    <property type="entry name" value="Asp/Glu/Uridylate_kinase"/>
</dbReference>
<dbReference type="InterPro" id="IPR041739">
    <property type="entry name" value="G5K_ProB"/>
</dbReference>
<dbReference type="InterPro" id="IPR001057">
    <property type="entry name" value="Glu/AcGlu_kinase"/>
</dbReference>
<dbReference type="InterPro" id="IPR011529">
    <property type="entry name" value="Glu_5kinase"/>
</dbReference>
<dbReference type="InterPro" id="IPR005715">
    <property type="entry name" value="Glu_5kinase/COase_Synthase"/>
</dbReference>
<dbReference type="InterPro" id="IPR019797">
    <property type="entry name" value="Glutamate_5-kinase_CS"/>
</dbReference>
<dbReference type="InterPro" id="IPR002478">
    <property type="entry name" value="PUA"/>
</dbReference>
<dbReference type="InterPro" id="IPR015947">
    <property type="entry name" value="PUA-like_sf"/>
</dbReference>
<dbReference type="InterPro" id="IPR036974">
    <property type="entry name" value="PUA_sf"/>
</dbReference>
<dbReference type="NCBIfam" id="TIGR01027">
    <property type="entry name" value="proB"/>
    <property type="match status" value="1"/>
</dbReference>
<dbReference type="PANTHER" id="PTHR43654">
    <property type="entry name" value="GLUTAMATE 5-KINASE"/>
    <property type="match status" value="1"/>
</dbReference>
<dbReference type="PANTHER" id="PTHR43654:SF1">
    <property type="entry name" value="ISOPENTENYL PHOSPHATE KINASE"/>
    <property type="match status" value="1"/>
</dbReference>
<dbReference type="Pfam" id="PF00696">
    <property type="entry name" value="AA_kinase"/>
    <property type="match status" value="1"/>
</dbReference>
<dbReference type="Pfam" id="PF01472">
    <property type="entry name" value="PUA"/>
    <property type="match status" value="1"/>
</dbReference>
<dbReference type="PIRSF" id="PIRSF000729">
    <property type="entry name" value="GK"/>
    <property type="match status" value="1"/>
</dbReference>
<dbReference type="PRINTS" id="PR00474">
    <property type="entry name" value="GLU5KINASE"/>
</dbReference>
<dbReference type="SMART" id="SM00359">
    <property type="entry name" value="PUA"/>
    <property type="match status" value="1"/>
</dbReference>
<dbReference type="SUPFAM" id="SSF53633">
    <property type="entry name" value="Carbamate kinase-like"/>
    <property type="match status" value="1"/>
</dbReference>
<dbReference type="SUPFAM" id="SSF88697">
    <property type="entry name" value="PUA domain-like"/>
    <property type="match status" value="1"/>
</dbReference>
<dbReference type="PROSITE" id="PS00902">
    <property type="entry name" value="GLUTAMATE_5_KINASE"/>
    <property type="match status" value="1"/>
</dbReference>
<dbReference type="PROSITE" id="PS50890">
    <property type="entry name" value="PUA"/>
    <property type="match status" value="1"/>
</dbReference>
<feature type="chain" id="PRO_0000230043" description="Glutamate 5-kinase">
    <location>
        <begin position="1"/>
        <end position="373"/>
    </location>
</feature>
<feature type="domain" description="PUA" evidence="1">
    <location>
        <begin position="281"/>
        <end position="359"/>
    </location>
</feature>
<feature type="binding site" evidence="1">
    <location>
        <position position="12"/>
    </location>
    <ligand>
        <name>ATP</name>
        <dbReference type="ChEBI" id="CHEBI:30616"/>
    </ligand>
</feature>
<feature type="binding site" evidence="1">
    <location>
        <position position="52"/>
    </location>
    <ligand>
        <name>substrate</name>
    </ligand>
</feature>
<feature type="binding site" evidence="1">
    <location>
        <position position="139"/>
    </location>
    <ligand>
        <name>substrate</name>
    </ligand>
</feature>
<feature type="binding site" evidence="1">
    <location>
        <position position="154"/>
    </location>
    <ligand>
        <name>substrate</name>
    </ligand>
</feature>
<feature type="binding site" evidence="1">
    <location>
        <begin position="216"/>
        <end position="222"/>
    </location>
    <ligand>
        <name>ATP</name>
        <dbReference type="ChEBI" id="CHEBI:30616"/>
    </ligand>
</feature>
<gene>
    <name evidence="1" type="primary">proB</name>
    <name type="ordered locus">DET1282</name>
</gene>